<reference key="1">
    <citation type="journal article" date="1989" name="Nucleic Acids Res.">
        <title>Nucleotide sequence of the unc operon of Vibrio alginolyticus.</title>
        <authorList>
            <person name="Krumholz L.R."/>
            <person name="Esser U."/>
            <person name="Simoni R.D."/>
        </authorList>
    </citation>
    <scope>NUCLEOTIDE SEQUENCE [GENOMIC DNA]</scope>
    <source>
        <strain>138-2</strain>
    </source>
</reference>
<evidence type="ECO:0000250" key="1"/>
<evidence type="ECO:0000305" key="2"/>
<accession>P12988</accession>
<proteinExistence type="inferred from homology"/>
<organism>
    <name type="scientific">Vibrio alginolyticus</name>
    <dbReference type="NCBI Taxonomy" id="663"/>
    <lineage>
        <taxon>Bacteria</taxon>
        <taxon>Pseudomonadati</taxon>
        <taxon>Pseudomonadota</taxon>
        <taxon>Gammaproteobacteria</taxon>
        <taxon>Vibrionales</taxon>
        <taxon>Vibrionaceae</taxon>
        <taxon>Vibrio</taxon>
    </lineage>
</organism>
<sequence>MAAITFHLDVVSAEKKIFSGRVETFQVTGSEGELGIFHGHTPLLTAIKPGMVRIVKQHGHEEIIYVSGGMVEIQPGTATVLADTAIRGEELDAAKAEEAKRRAEEQIQNQHGDMDFAQAASELAKAIAQLRVIELTKKRR</sequence>
<feature type="chain" id="PRO_0000188235" description="ATP synthase epsilon chain">
    <location>
        <begin position="1"/>
        <end position="140"/>
    </location>
</feature>
<name>ATPE_VIBAL</name>
<gene>
    <name type="primary">atpC</name>
    <name type="synonym">uncC</name>
</gene>
<comment type="function">
    <text evidence="1">Produces ATP from ADP in the presence of a proton gradient across the membrane.</text>
</comment>
<comment type="subunit">
    <text>F-type ATPases have 2 components, CF(1) - the catalytic core - and CF(0) - the membrane proton channel. CF(1) has five subunits: alpha(3), beta(3), gamma(1), delta(1), epsilon(1). CF(0) has three main subunits: a, b and c.</text>
</comment>
<comment type="subcellular location">
    <subcellularLocation>
        <location evidence="1">Cell inner membrane</location>
        <topology evidence="1">Peripheral membrane protein</topology>
    </subcellularLocation>
</comment>
<comment type="similarity">
    <text evidence="2">Belongs to the ATPase epsilon chain family.</text>
</comment>
<keyword id="KW-0066">ATP synthesis</keyword>
<keyword id="KW-0997">Cell inner membrane</keyword>
<keyword id="KW-1003">Cell membrane</keyword>
<keyword id="KW-0139">CF(1)</keyword>
<keyword id="KW-0375">Hydrogen ion transport</keyword>
<keyword id="KW-0406">Ion transport</keyword>
<keyword id="KW-0472">Membrane</keyword>
<keyword id="KW-0813">Transport</keyword>
<protein>
    <recommendedName>
        <fullName>ATP synthase epsilon chain</fullName>
    </recommendedName>
    <alternativeName>
        <fullName>ATP synthase F1 sector epsilon subunit</fullName>
    </alternativeName>
    <alternativeName>
        <fullName>F-ATPase epsilon subunit</fullName>
    </alternativeName>
</protein>
<dbReference type="EMBL" id="X16050">
    <property type="protein sequence ID" value="CAA34182.1"/>
    <property type="molecule type" value="Genomic_DNA"/>
</dbReference>
<dbReference type="PIR" id="S06083">
    <property type="entry name" value="S06083"/>
</dbReference>
<dbReference type="RefSeq" id="WP_005378937.1">
    <property type="nucleotide sequence ID" value="NZ_WAHT01000005.1"/>
</dbReference>
<dbReference type="SMR" id="P12988"/>
<dbReference type="STRING" id="663.BAU10_15075"/>
<dbReference type="eggNOG" id="COG0355">
    <property type="taxonomic scope" value="Bacteria"/>
</dbReference>
<dbReference type="OrthoDB" id="9791445at2"/>
<dbReference type="GO" id="GO:0005886">
    <property type="term" value="C:plasma membrane"/>
    <property type="evidence" value="ECO:0007669"/>
    <property type="project" value="UniProtKB-SubCell"/>
</dbReference>
<dbReference type="GO" id="GO:0045259">
    <property type="term" value="C:proton-transporting ATP synthase complex"/>
    <property type="evidence" value="ECO:0007669"/>
    <property type="project" value="UniProtKB-KW"/>
</dbReference>
<dbReference type="GO" id="GO:0005524">
    <property type="term" value="F:ATP binding"/>
    <property type="evidence" value="ECO:0007669"/>
    <property type="project" value="UniProtKB-UniRule"/>
</dbReference>
<dbReference type="GO" id="GO:0046933">
    <property type="term" value="F:proton-transporting ATP synthase activity, rotational mechanism"/>
    <property type="evidence" value="ECO:0007669"/>
    <property type="project" value="UniProtKB-UniRule"/>
</dbReference>
<dbReference type="CDD" id="cd12152">
    <property type="entry name" value="F1-ATPase_delta"/>
    <property type="match status" value="1"/>
</dbReference>
<dbReference type="FunFam" id="1.20.5.440:FF:000001">
    <property type="entry name" value="ATP synthase epsilon chain"/>
    <property type="match status" value="1"/>
</dbReference>
<dbReference type="FunFam" id="2.60.15.10:FF:000001">
    <property type="entry name" value="ATP synthase epsilon chain"/>
    <property type="match status" value="1"/>
</dbReference>
<dbReference type="Gene3D" id="1.20.5.440">
    <property type="entry name" value="ATP synthase delta/epsilon subunit, C-terminal domain"/>
    <property type="match status" value="1"/>
</dbReference>
<dbReference type="Gene3D" id="2.60.15.10">
    <property type="entry name" value="F0F1 ATP synthase delta/epsilon subunit, N-terminal"/>
    <property type="match status" value="1"/>
</dbReference>
<dbReference type="HAMAP" id="MF_00530">
    <property type="entry name" value="ATP_synth_epsil_bac"/>
    <property type="match status" value="1"/>
</dbReference>
<dbReference type="InterPro" id="IPR036794">
    <property type="entry name" value="ATP_F1_dsu/esu_C_sf"/>
</dbReference>
<dbReference type="InterPro" id="IPR001469">
    <property type="entry name" value="ATP_synth_F1_dsu/esu"/>
</dbReference>
<dbReference type="InterPro" id="IPR020546">
    <property type="entry name" value="ATP_synth_F1_dsu/esu_N"/>
</dbReference>
<dbReference type="InterPro" id="IPR020547">
    <property type="entry name" value="ATP_synth_F1_esu_C"/>
</dbReference>
<dbReference type="InterPro" id="IPR036771">
    <property type="entry name" value="ATPsynth_dsu/esu_N"/>
</dbReference>
<dbReference type="NCBIfam" id="TIGR01216">
    <property type="entry name" value="ATP_synt_epsi"/>
    <property type="match status" value="1"/>
</dbReference>
<dbReference type="NCBIfam" id="NF001847">
    <property type="entry name" value="PRK00571.1-4"/>
    <property type="match status" value="1"/>
</dbReference>
<dbReference type="PANTHER" id="PTHR13822">
    <property type="entry name" value="ATP SYNTHASE DELTA/EPSILON CHAIN"/>
    <property type="match status" value="1"/>
</dbReference>
<dbReference type="PANTHER" id="PTHR13822:SF10">
    <property type="entry name" value="ATP SYNTHASE EPSILON CHAIN, CHLOROPLASTIC"/>
    <property type="match status" value="1"/>
</dbReference>
<dbReference type="Pfam" id="PF00401">
    <property type="entry name" value="ATP-synt_DE"/>
    <property type="match status" value="1"/>
</dbReference>
<dbReference type="Pfam" id="PF02823">
    <property type="entry name" value="ATP-synt_DE_N"/>
    <property type="match status" value="1"/>
</dbReference>
<dbReference type="SUPFAM" id="SSF46604">
    <property type="entry name" value="Epsilon subunit of F1F0-ATP synthase C-terminal domain"/>
    <property type="match status" value="1"/>
</dbReference>
<dbReference type="SUPFAM" id="SSF51344">
    <property type="entry name" value="Epsilon subunit of F1F0-ATP synthase N-terminal domain"/>
    <property type="match status" value="1"/>
</dbReference>